<feature type="chain" id="PRO_1000068278" description="Peptide methionine sulfoxide reductase MsrB">
    <location>
        <begin position="1"/>
        <end position="142"/>
    </location>
</feature>
<feature type="domain" description="MsrB" evidence="2">
    <location>
        <begin position="10"/>
        <end position="132"/>
    </location>
</feature>
<feature type="active site" description="Nucleophile" evidence="2">
    <location>
        <position position="121"/>
    </location>
</feature>
<feature type="binding site" evidence="2">
    <location>
        <position position="49"/>
    </location>
    <ligand>
        <name>Zn(2+)</name>
        <dbReference type="ChEBI" id="CHEBI:29105"/>
    </ligand>
</feature>
<feature type="binding site" evidence="2">
    <location>
        <position position="52"/>
    </location>
    <ligand>
        <name>Zn(2+)</name>
        <dbReference type="ChEBI" id="CHEBI:29105"/>
    </ligand>
</feature>
<feature type="binding site" evidence="2">
    <location>
        <position position="98"/>
    </location>
    <ligand>
        <name>Zn(2+)</name>
        <dbReference type="ChEBI" id="CHEBI:29105"/>
    </ligand>
</feature>
<feature type="binding site" evidence="2">
    <location>
        <position position="101"/>
    </location>
    <ligand>
        <name>Zn(2+)</name>
        <dbReference type="ChEBI" id="CHEBI:29105"/>
    </ligand>
</feature>
<keyword id="KW-0479">Metal-binding</keyword>
<keyword id="KW-0560">Oxidoreductase</keyword>
<keyword id="KW-0862">Zinc</keyword>
<sequence length="142" mass="16242">MAQKAVEKSEEEWKKVLTPEQYHVLRQKGTERPFSGNLYYNKEKGVYTCAACGQELFSSDTKFESGTGWPSFYDVISSDRVRLKEDTSYFMNRIEVVCSRCGSHLGHVFEDGPAPTGKRYCINSVSLNFKTEEEGKQGEERM</sequence>
<accession>Q46EH1</accession>
<dbReference type="EC" id="1.8.4.12" evidence="1"/>
<dbReference type="EMBL" id="CP000099">
    <property type="protein sequence ID" value="AAZ69721.1"/>
    <property type="molecule type" value="Genomic_DNA"/>
</dbReference>
<dbReference type="SMR" id="Q46EH1"/>
<dbReference type="STRING" id="269797.Mbar_A0743"/>
<dbReference type="PaxDb" id="269797-Mbar_A0743"/>
<dbReference type="KEGG" id="mba:Mbar_A0743"/>
<dbReference type="eggNOG" id="arCOG02815">
    <property type="taxonomic scope" value="Archaea"/>
</dbReference>
<dbReference type="HOGENOM" id="CLU_031040_8_5_2"/>
<dbReference type="OrthoDB" id="5961at2157"/>
<dbReference type="GO" id="GO:0005737">
    <property type="term" value="C:cytoplasm"/>
    <property type="evidence" value="ECO:0007669"/>
    <property type="project" value="TreeGrafter"/>
</dbReference>
<dbReference type="GO" id="GO:0033743">
    <property type="term" value="F:peptide-methionine (R)-S-oxide reductase activity"/>
    <property type="evidence" value="ECO:0007669"/>
    <property type="project" value="UniProtKB-UniRule"/>
</dbReference>
<dbReference type="GO" id="GO:0008270">
    <property type="term" value="F:zinc ion binding"/>
    <property type="evidence" value="ECO:0007669"/>
    <property type="project" value="UniProtKB-UniRule"/>
</dbReference>
<dbReference type="GO" id="GO:0030091">
    <property type="term" value="P:protein repair"/>
    <property type="evidence" value="ECO:0007669"/>
    <property type="project" value="InterPro"/>
</dbReference>
<dbReference type="GO" id="GO:0006979">
    <property type="term" value="P:response to oxidative stress"/>
    <property type="evidence" value="ECO:0007669"/>
    <property type="project" value="InterPro"/>
</dbReference>
<dbReference type="FunFam" id="2.170.150.20:FF:000001">
    <property type="entry name" value="Peptide methionine sulfoxide reductase MsrB"/>
    <property type="match status" value="1"/>
</dbReference>
<dbReference type="Gene3D" id="2.170.150.20">
    <property type="entry name" value="Peptide methionine sulfoxide reductase"/>
    <property type="match status" value="1"/>
</dbReference>
<dbReference type="HAMAP" id="MF_01400">
    <property type="entry name" value="MsrB"/>
    <property type="match status" value="1"/>
</dbReference>
<dbReference type="InterPro" id="IPR028427">
    <property type="entry name" value="Met_Sox_Rdtase_MsrB"/>
</dbReference>
<dbReference type="InterPro" id="IPR002579">
    <property type="entry name" value="Met_Sox_Rdtase_MsrB_dom"/>
</dbReference>
<dbReference type="InterPro" id="IPR011057">
    <property type="entry name" value="Mss4-like_sf"/>
</dbReference>
<dbReference type="NCBIfam" id="TIGR00357">
    <property type="entry name" value="peptide-methionine (R)-S-oxide reductase MsrB"/>
    <property type="match status" value="1"/>
</dbReference>
<dbReference type="PANTHER" id="PTHR10173">
    <property type="entry name" value="METHIONINE SULFOXIDE REDUCTASE"/>
    <property type="match status" value="1"/>
</dbReference>
<dbReference type="PANTHER" id="PTHR10173:SF52">
    <property type="entry name" value="METHIONINE-R-SULFOXIDE REDUCTASE B1"/>
    <property type="match status" value="1"/>
</dbReference>
<dbReference type="Pfam" id="PF01641">
    <property type="entry name" value="SelR"/>
    <property type="match status" value="1"/>
</dbReference>
<dbReference type="SUPFAM" id="SSF51316">
    <property type="entry name" value="Mss4-like"/>
    <property type="match status" value="1"/>
</dbReference>
<dbReference type="PROSITE" id="PS51790">
    <property type="entry name" value="MSRB"/>
    <property type="match status" value="1"/>
</dbReference>
<gene>
    <name evidence="1" type="primary">msrB</name>
    <name type="ordered locus">Mbar_A0743</name>
</gene>
<proteinExistence type="inferred from homology"/>
<comment type="catalytic activity">
    <reaction evidence="1">
        <text>L-methionyl-[protein] + [thioredoxin]-disulfide + H2O = L-methionyl-(R)-S-oxide-[protein] + [thioredoxin]-dithiol</text>
        <dbReference type="Rhea" id="RHEA:24164"/>
        <dbReference type="Rhea" id="RHEA-COMP:10698"/>
        <dbReference type="Rhea" id="RHEA-COMP:10700"/>
        <dbReference type="Rhea" id="RHEA-COMP:12313"/>
        <dbReference type="Rhea" id="RHEA-COMP:12314"/>
        <dbReference type="ChEBI" id="CHEBI:15377"/>
        <dbReference type="ChEBI" id="CHEBI:16044"/>
        <dbReference type="ChEBI" id="CHEBI:29950"/>
        <dbReference type="ChEBI" id="CHEBI:45764"/>
        <dbReference type="ChEBI" id="CHEBI:50058"/>
        <dbReference type="EC" id="1.8.4.12"/>
    </reaction>
</comment>
<comment type="cofactor">
    <cofactor evidence="1">
        <name>Zn(2+)</name>
        <dbReference type="ChEBI" id="CHEBI:29105"/>
    </cofactor>
    <text evidence="1">Binds 1 zinc ion per subunit. The zinc ion is important for the structural integrity of the protein.</text>
</comment>
<comment type="similarity">
    <text evidence="1">Belongs to the MsrB Met sulfoxide reductase family.</text>
</comment>
<reference key="1">
    <citation type="journal article" date="2006" name="J. Bacteriol.">
        <title>The Methanosarcina barkeri genome: comparative analysis with Methanosarcina acetivorans and Methanosarcina mazei reveals extensive rearrangement within methanosarcinal genomes.</title>
        <authorList>
            <person name="Maeder D.L."/>
            <person name="Anderson I."/>
            <person name="Brettin T.S."/>
            <person name="Bruce D.C."/>
            <person name="Gilna P."/>
            <person name="Han C.S."/>
            <person name="Lapidus A."/>
            <person name="Metcalf W.W."/>
            <person name="Saunders E."/>
            <person name="Tapia R."/>
            <person name="Sowers K.R."/>
        </authorList>
    </citation>
    <scope>NUCLEOTIDE SEQUENCE [LARGE SCALE GENOMIC DNA]</scope>
    <source>
        <strain>Fusaro / DSM 804</strain>
    </source>
</reference>
<name>MSRB_METBF</name>
<organism>
    <name type="scientific">Methanosarcina barkeri (strain Fusaro / DSM 804)</name>
    <dbReference type="NCBI Taxonomy" id="269797"/>
    <lineage>
        <taxon>Archaea</taxon>
        <taxon>Methanobacteriati</taxon>
        <taxon>Methanobacteriota</taxon>
        <taxon>Stenosarchaea group</taxon>
        <taxon>Methanomicrobia</taxon>
        <taxon>Methanosarcinales</taxon>
        <taxon>Methanosarcinaceae</taxon>
        <taxon>Methanosarcina</taxon>
    </lineage>
</organism>
<evidence type="ECO:0000255" key="1">
    <source>
        <dbReference type="HAMAP-Rule" id="MF_01400"/>
    </source>
</evidence>
<evidence type="ECO:0000255" key="2">
    <source>
        <dbReference type="PROSITE-ProRule" id="PRU01126"/>
    </source>
</evidence>
<protein>
    <recommendedName>
        <fullName evidence="1">Peptide methionine sulfoxide reductase MsrB</fullName>
        <ecNumber evidence="1">1.8.4.12</ecNumber>
    </recommendedName>
    <alternativeName>
        <fullName evidence="1">Peptide-methionine (R)-S-oxide reductase</fullName>
    </alternativeName>
</protein>